<reference key="1">
    <citation type="journal article" date="2006" name="J. Bacteriol.">
        <title>Chromosome rearrangement and diversification of Francisella tularensis revealed by the type B (OSU18) genome sequence.</title>
        <authorList>
            <person name="Petrosino J.F."/>
            <person name="Xiang Q."/>
            <person name="Karpathy S.E."/>
            <person name="Jiang H."/>
            <person name="Yerrapragada S."/>
            <person name="Liu Y."/>
            <person name="Gioia J."/>
            <person name="Hemphill L."/>
            <person name="Gonzalez A."/>
            <person name="Raghavan T.M."/>
            <person name="Uzman A."/>
            <person name="Fox G.E."/>
            <person name="Highlander S."/>
            <person name="Reichard M."/>
            <person name="Morton R.J."/>
            <person name="Clinkenbeard K.D."/>
            <person name="Weinstock G.M."/>
        </authorList>
    </citation>
    <scope>NUCLEOTIDE SEQUENCE [LARGE SCALE GENOMIC DNA]</scope>
    <source>
        <strain>OSU18</strain>
    </source>
</reference>
<feature type="chain" id="PRO_0000284208" description="Endoribonuclease YbeY">
    <location>
        <begin position="1"/>
        <end position="162"/>
    </location>
</feature>
<feature type="binding site" evidence="1">
    <location>
        <position position="117"/>
    </location>
    <ligand>
        <name>Zn(2+)</name>
        <dbReference type="ChEBI" id="CHEBI:29105"/>
        <note>catalytic</note>
    </ligand>
</feature>
<feature type="binding site" evidence="1">
    <location>
        <position position="121"/>
    </location>
    <ligand>
        <name>Zn(2+)</name>
        <dbReference type="ChEBI" id="CHEBI:29105"/>
        <note>catalytic</note>
    </ligand>
</feature>
<feature type="binding site" evidence="1">
    <location>
        <position position="127"/>
    </location>
    <ligand>
        <name>Zn(2+)</name>
        <dbReference type="ChEBI" id="CHEBI:29105"/>
        <note>catalytic</note>
    </ligand>
</feature>
<protein>
    <recommendedName>
        <fullName evidence="1">Endoribonuclease YbeY</fullName>
        <ecNumber evidence="1">3.1.-.-</ecNumber>
    </recommendedName>
</protein>
<organism>
    <name type="scientific">Francisella tularensis subsp. holarctica (strain OSU18)</name>
    <dbReference type="NCBI Taxonomy" id="393011"/>
    <lineage>
        <taxon>Bacteria</taxon>
        <taxon>Pseudomonadati</taxon>
        <taxon>Pseudomonadota</taxon>
        <taxon>Gammaproteobacteria</taxon>
        <taxon>Thiotrichales</taxon>
        <taxon>Francisellaceae</taxon>
        <taxon>Francisella</taxon>
    </lineage>
</organism>
<proteinExistence type="inferred from homology"/>
<evidence type="ECO:0000255" key="1">
    <source>
        <dbReference type="HAMAP-Rule" id="MF_00009"/>
    </source>
</evidence>
<comment type="function">
    <text evidence="1">Single strand-specific metallo-endoribonuclease involved in late-stage 70S ribosome quality control and in maturation of the 3' terminus of the 16S rRNA.</text>
</comment>
<comment type="cofactor">
    <cofactor evidence="1">
        <name>Zn(2+)</name>
        <dbReference type="ChEBI" id="CHEBI:29105"/>
    </cofactor>
    <text evidence="1">Binds 1 zinc ion.</text>
</comment>
<comment type="subcellular location">
    <subcellularLocation>
        <location evidence="1">Cytoplasm</location>
    </subcellularLocation>
</comment>
<comment type="similarity">
    <text evidence="1">Belongs to the endoribonuclease YbeY family.</text>
</comment>
<keyword id="KW-0963">Cytoplasm</keyword>
<keyword id="KW-0255">Endonuclease</keyword>
<keyword id="KW-0378">Hydrolase</keyword>
<keyword id="KW-0479">Metal-binding</keyword>
<keyword id="KW-0540">Nuclease</keyword>
<keyword id="KW-0690">Ribosome biogenesis</keyword>
<keyword id="KW-0698">rRNA processing</keyword>
<keyword id="KW-0862">Zinc</keyword>
<dbReference type="EC" id="3.1.-.-" evidence="1"/>
<dbReference type="EMBL" id="CP000437">
    <property type="protein sequence ID" value="ABI82786.1"/>
    <property type="molecule type" value="Genomic_DNA"/>
</dbReference>
<dbReference type="RefSeq" id="WP_010031277.1">
    <property type="nucleotide sequence ID" value="NC_017463.1"/>
</dbReference>
<dbReference type="SMR" id="Q0BM98"/>
<dbReference type="KEGG" id="fth:FTH_0870"/>
<dbReference type="GO" id="GO:0005737">
    <property type="term" value="C:cytoplasm"/>
    <property type="evidence" value="ECO:0007669"/>
    <property type="project" value="UniProtKB-SubCell"/>
</dbReference>
<dbReference type="GO" id="GO:0004222">
    <property type="term" value="F:metalloendopeptidase activity"/>
    <property type="evidence" value="ECO:0007669"/>
    <property type="project" value="InterPro"/>
</dbReference>
<dbReference type="GO" id="GO:0004521">
    <property type="term" value="F:RNA endonuclease activity"/>
    <property type="evidence" value="ECO:0007669"/>
    <property type="project" value="UniProtKB-UniRule"/>
</dbReference>
<dbReference type="GO" id="GO:0008270">
    <property type="term" value="F:zinc ion binding"/>
    <property type="evidence" value="ECO:0007669"/>
    <property type="project" value="UniProtKB-UniRule"/>
</dbReference>
<dbReference type="GO" id="GO:0006364">
    <property type="term" value="P:rRNA processing"/>
    <property type="evidence" value="ECO:0007669"/>
    <property type="project" value="UniProtKB-UniRule"/>
</dbReference>
<dbReference type="Gene3D" id="3.40.390.30">
    <property type="entry name" value="Metalloproteases ('zincins'), catalytic domain"/>
    <property type="match status" value="1"/>
</dbReference>
<dbReference type="HAMAP" id="MF_00009">
    <property type="entry name" value="Endoribonucl_YbeY"/>
    <property type="match status" value="1"/>
</dbReference>
<dbReference type="InterPro" id="IPR023091">
    <property type="entry name" value="MetalPrtase_cat_dom_sf_prd"/>
</dbReference>
<dbReference type="InterPro" id="IPR002036">
    <property type="entry name" value="YbeY"/>
</dbReference>
<dbReference type="InterPro" id="IPR020549">
    <property type="entry name" value="YbeY_CS"/>
</dbReference>
<dbReference type="NCBIfam" id="TIGR00043">
    <property type="entry name" value="rRNA maturation RNase YbeY"/>
    <property type="match status" value="1"/>
</dbReference>
<dbReference type="PANTHER" id="PTHR46986">
    <property type="entry name" value="ENDORIBONUCLEASE YBEY, CHLOROPLASTIC"/>
    <property type="match status" value="1"/>
</dbReference>
<dbReference type="PANTHER" id="PTHR46986:SF1">
    <property type="entry name" value="ENDORIBONUCLEASE YBEY, CHLOROPLASTIC"/>
    <property type="match status" value="1"/>
</dbReference>
<dbReference type="Pfam" id="PF02130">
    <property type="entry name" value="YbeY"/>
    <property type="match status" value="1"/>
</dbReference>
<dbReference type="SUPFAM" id="SSF55486">
    <property type="entry name" value="Metalloproteases ('zincins'), catalytic domain"/>
    <property type="match status" value="1"/>
</dbReference>
<dbReference type="PROSITE" id="PS01306">
    <property type="entry name" value="UPF0054"/>
    <property type="match status" value="1"/>
</dbReference>
<gene>
    <name evidence="1" type="primary">ybeY</name>
    <name type="ordered locus">FTH_0870</name>
</gene>
<sequence length="162" mass="18642">MDNLNINFINDDEHPIPSQDLLLKCLQLVADKHHISHAEVNLNIVSNDEIQQINKQFRNKDKPTNIISFEFEKPQGLPDDIANDFLGDIVIAPAVLENEAKEQNKEINDHWQHIFIHGLLHLLGYDHQDDQEAEVMENLEIQLLAQLGIANPYIEQENQNGR</sequence>
<accession>Q0BM98</accession>
<name>YBEY_FRATO</name>